<keyword id="KW-1003">Cell membrane</keyword>
<keyword id="KW-0175">Coiled coil</keyword>
<keyword id="KW-0449">Lipoprotein</keyword>
<keyword id="KW-0472">Membrane</keyword>
<keyword id="KW-0519">Myristate</keyword>
<keyword id="KW-1185">Reference proteome</keyword>
<proteinExistence type="evidence at protein level"/>
<accession>Q9FM19</accession>
<gene>
    <name evidence="6" type="primary">HIR1</name>
    <name evidence="7" type="synonym">P31</name>
    <name evidence="12" type="ordered locus">At5g62740</name>
    <name evidence="13" type="ORF">MQB2.6</name>
</gene>
<name>HIR1_ARATH</name>
<sequence length="286" mass="31431">MGNLFCCVQVDQSTVAIKETFGKFEDVLEPGCHFLPWCLGSQVAGYLSLRVQQLDVRCETKTKDNVFVNVVASIQYRALANKANDAYYKLSNTRGQIQAYVFDVIRASVPKLLLDDVFEQKNDIAKAVEEELEKAMSAYGYEIVQTLIVDIEPDEHVKRAMNEINAAARMRLAANEKAEAEKILQIKRAEGEAESKYLSGLGIARQRQAIVDGLRDSVLGFAVNVPGTTAKDVMDMVLVTQYFDTMKEIGASSKSSAVFIPHGPGAVRDVASQIRDGLLQGSSANL</sequence>
<protein>
    <recommendedName>
        <fullName evidence="6">Hypersensitive-induced response protein 1</fullName>
        <shortName evidence="6">AtHIR1</shortName>
    </recommendedName>
</protein>
<dbReference type="EMBL" id="AY062850">
    <property type="protein sequence ID" value="AAL32928.1"/>
    <property type="molecule type" value="mRNA"/>
</dbReference>
<dbReference type="EMBL" id="AY114572">
    <property type="protein sequence ID" value="AAM47891.1"/>
    <property type="molecule type" value="mRNA"/>
</dbReference>
<dbReference type="EMBL" id="AY086631">
    <property type="protein sequence ID" value="AAM63689.1"/>
    <property type="molecule type" value="mRNA"/>
</dbReference>
<dbReference type="EMBL" id="AB009053">
    <property type="protein sequence ID" value="BAB10843.1"/>
    <property type="molecule type" value="Genomic_DNA"/>
</dbReference>
<dbReference type="EMBL" id="CP002688">
    <property type="protein sequence ID" value="AED97649.1"/>
    <property type="molecule type" value="Genomic_DNA"/>
</dbReference>
<dbReference type="RefSeq" id="NP_201080.1">
    <property type="nucleotide sequence ID" value="NM_125669.3"/>
</dbReference>
<dbReference type="SMR" id="Q9FM19"/>
<dbReference type="BioGRID" id="21638">
    <property type="interactions" value="4"/>
</dbReference>
<dbReference type="FunCoup" id="Q9FM19">
    <property type="interactions" value="193"/>
</dbReference>
<dbReference type="IntAct" id="Q9FM19">
    <property type="interactions" value="2"/>
</dbReference>
<dbReference type="STRING" id="3702.Q9FM19"/>
<dbReference type="iPTMnet" id="Q9FM19"/>
<dbReference type="SwissPalm" id="Q9FM19"/>
<dbReference type="PaxDb" id="3702-AT5G62740.1"/>
<dbReference type="ProteomicsDB" id="228742"/>
<dbReference type="EnsemblPlants" id="AT5G62740.1">
    <property type="protein sequence ID" value="AT5G62740.1"/>
    <property type="gene ID" value="AT5G62740"/>
</dbReference>
<dbReference type="GeneID" id="836395"/>
<dbReference type="Gramene" id="AT5G62740.1">
    <property type="protein sequence ID" value="AT5G62740.1"/>
    <property type="gene ID" value="AT5G62740"/>
</dbReference>
<dbReference type="KEGG" id="ath:AT5G62740"/>
<dbReference type="Araport" id="AT5G62740"/>
<dbReference type="TAIR" id="AT5G62740">
    <property type="gene designation" value="HIR1"/>
</dbReference>
<dbReference type="eggNOG" id="KOG2620">
    <property type="taxonomic scope" value="Eukaryota"/>
</dbReference>
<dbReference type="HOGENOM" id="CLU_024949_5_1_1"/>
<dbReference type="InParanoid" id="Q9FM19"/>
<dbReference type="OMA" id="AFYRFSN"/>
<dbReference type="OrthoDB" id="434619at2759"/>
<dbReference type="PhylomeDB" id="Q9FM19"/>
<dbReference type="PRO" id="PR:Q9FM19"/>
<dbReference type="Proteomes" id="UP000006548">
    <property type="component" value="Chromosome 5"/>
</dbReference>
<dbReference type="ExpressionAtlas" id="Q9FM19">
    <property type="expression patterns" value="baseline and differential"/>
</dbReference>
<dbReference type="GO" id="GO:0005794">
    <property type="term" value="C:Golgi apparatus"/>
    <property type="evidence" value="ECO:0007005"/>
    <property type="project" value="TAIR"/>
</dbReference>
<dbReference type="GO" id="GO:0000325">
    <property type="term" value="C:plant-type vacuole"/>
    <property type="evidence" value="ECO:0007005"/>
    <property type="project" value="TAIR"/>
</dbReference>
<dbReference type="GO" id="GO:0005886">
    <property type="term" value="C:plasma membrane"/>
    <property type="evidence" value="ECO:0007005"/>
    <property type="project" value="TAIR"/>
</dbReference>
<dbReference type="GO" id="GO:0009506">
    <property type="term" value="C:plasmodesma"/>
    <property type="evidence" value="ECO:0007005"/>
    <property type="project" value="TAIR"/>
</dbReference>
<dbReference type="GO" id="GO:0009536">
    <property type="term" value="C:plastid"/>
    <property type="evidence" value="ECO:0007005"/>
    <property type="project" value="TAIR"/>
</dbReference>
<dbReference type="GO" id="GO:0043424">
    <property type="term" value="F:protein histidine kinase binding"/>
    <property type="evidence" value="ECO:0000353"/>
    <property type="project" value="UniProtKB"/>
</dbReference>
<dbReference type="CDD" id="cd03407">
    <property type="entry name" value="SPFH_like_u4"/>
    <property type="match status" value="1"/>
</dbReference>
<dbReference type="FunFam" id="3.30.479.30:FF:000013">
    <property type="entry name" value="Hypersensitive-induced response protein 1"/>
    <property type="match status" value="1"/>
</dbReference>
<dbReference type="Gene3D" id="3.30.479.30">
    <property type="entry name" value="Band 7 domain"/>
    <property type="match status" value="1"/>
</dbReference>
<dbReference type="InterPro" id="IPR050710">
    <property type="entry name" value="Band7/mec-2_domain"/>
</dbReference>
<dbReference type="InterPro" id="IPR001107">
    <property type="entry name" value="Band_7"/>
</dbReference>
<dbReference type="InterPro" id="IPR036013">
    <property type="entry name" value="Band_7/SPFH_dom_sf"/>
</dbReference>
<dbReference type="PANTHER" id="PTHR43327:SF36">
    <property type="entry name" value="HYPERSENSITIVE-INDUCED RESPONSE PROTEIN 1"/>
    <property type="match status" value="1"/>
</dbReference>
<dbReference type="PANTHER" id="PTHR43327">
    <property type="entry name" value="STOMATIN-LIKE PROTEIN 2, MITOCHONDRIAL"/>
    <property type="match status" value="1"/>
</dbReference>
<dbReference type="Pfam" id="PF01145">
    <property type="entry name" value="Band_7"/>
    <property type="match status" value="1"/>
</dbReference>
<dbReference type="SMART" id="SM00244">
    <property type="entry name" value="PHB"/>
    <property type="match status" value="1"/>
</dbReference>
<dbReference type="SUPFAM" id="SSF117892">
    <property type="entry name" value="Band 7/SPFH domain"/>
    <property type="match status" value="1"/>
</dbReference>
<reference key="1">
    <citation type="journal article" date="1998" name="DNA Res.">
        <title>Structural analysis of Arabidopsis thaliana chromosome 5. IV. Sequence features of the regions of 1,456,315 bp covered by nineteen physically assigned P1 and TAC clones.</title>
        <authorList>
            <person name="Sato S."/>
            <person name="Kaneko T."/>
            <person name="Kotani H."/>
            <person name="Nakamura Y."/>
            <person name="Asamizu E."/>
            <person name="Miyajima N."/>
            <person name="Tabata S."/>
        </authorList>
    </citation>
    <scope>NUCLEOTIDE SEQUENCE [LARGE SCALE GENOMIC DNA]</scope>
    <source>
        <strain>cv. Columbia</strain>
    </source>
</reference>
<reference key="2">
    <citation type="journal article" date="2017" name="Plant J.">
        <title>Araport11: a complete reannotation of the Arabidopsis thaliana reference genome.</title>
        <authorList>
            <person name="Cheng C.Y."/>
            <person name="Krishnakumar V."/>
            <person name="Chan A.P."/>
            <person name="Thibaud-Nissen F."/>
            <person name="Schobel S."/>
            <person name="Town C.D."/>
        </authorList>
    </citation>
    <scope>GENOME REANNOTATION</scope>
    <source>
        <strain>cv. Columbia</strain>
    </source>
</reference>
<reference key="3">
    <citation type="journal article" date="2003" name="Science">
        <title>Empirical analysis of transcriptional activity in the Arabidopsis genome.</title>
        <authorList>
            <person name="Yamada K."/>
            <person name="Lim J."/>
            <person name="Dale J.M."/>
            <person name="Chen H."/>
            <person name="Shinn P."/>
            <person name="Palm C.J."/>
            <person name="Southwick A.M."/>
            <person name="Wu H.C."/>
            <person name="Kim C.J."/>
            <person name="Nguyen M."/>
            <person name="Pham P.K."/>
            <person name="Cheuk R.F."/>
            <person name="Karlin-Newmann G."/>
            <person name="Liu S.X."/>
            <person name="Lam B."/>
            <person name="Sakano H."/>
            <person name="Wu T."/>
            <person name="Yu G."/>
            <person name="Miranda M."/>
            <person name="Quach H.L."/>
            <person name="Tripp M."/>
            <person name="Chang C.H."/>
            <person name="Lee J.M."/>
            <person name="Toriumi M.J."/>
            <person name="Chan M.M."/>
            <person name="Tang C.C."/>
            <person name="Onodera C.S."/>
            <person name="Deng J.M."/>
            <person name="Akiyama K."/>
            <person name="Ansari Y."/>
            <person name="Arakawa T."/>
            <person name="Banh J."/>
            <person name="Banno F."/>
            <person name="Bowser L."/>
            <person name="Brooks S.Y."/>
            <person name="Carninci P."/>
            <person name="Chao Q."/>
            <person name="Choy N."/>
            <person name="Enju A."/>
            <person name="Goldsmith A.D."/>
            <person name="Gurjal M."/>
            <person name="Hansen N.F."/>
            <person name="Hayashizaki Y."/>
            <person name="Johnson-Hopson C."/>
            <person name="Hsuan V.W."/>
            <person name="Iida K."/>
            <person name="Karnes M."/>
            <person name="Khan S."/>
            <person name="Koesema E."/>
            <person name="Ishida J."/>
            <person name="Jiang P.X."/>
            <person name="Jones T."/>
            <person name="Kawai J."/>
            <person name="Kamiya A."/>
            <person name="Meyers C."/>
            <person name="Nakajima M."/>
            <person name="Narusaka M."/>
            <person name="Seki M."/>
            <person name="Sakurai T."/>
            <person name="Satou M."/>
            <person name="Tamse R."/>
            <person name="Vaysberg M."/>
            <person name="Wallender E.K."/>
            <person name="Wong C."/>
            <person name="Yamamura Y."/>
            <person name="Yuan S."/>
            <person name="Shinozaki K."/>
            <person name="Davis R.W."/>
            <person name="Theologis A."/>
            <person name="Ecker J.R."/>
        </authorList>
    </citation>
    <scope>NUCLEOTIDE SEQUENCE [LARGE SCALE MRNA]</scope>
    <source>
        <strain>cv. Columbia</strain>
    </source>
</reference>
<reference key="4">
    <citation type="submission" date="2002-03" db="EMBL/GenBank/DDBJ databases">
        <title>Full-length cDNA from Arabidopsis thaliana.</title>
        <authorList>
            <person name="Brover V.V."/>
            <person name="Troukhan M.E."/>
            <person name="Alexandrov N.A."/>
            <person name="Lu Y.-P."/>
            <person name="Flavell R.B."/>
            <person name="Feldmann K.A."/>
        </authorList>
    </citation>
    <scope>NUCLEOTIDE SEQUENCE [LARGE SCALE MRNA]</scope>
</reference>
<reference key="5">
    <citation type="journal article" date="2004" name="Mol. Cell. Proteomics">
        <title>Identification of new intrinsic proteins in Arabidopsis plasma membrane proteome.</title>
        <authorList>
            <person name="Marmagne A."/>
            <person name="Rouet M.-A."/>
            <person name="Ferro M."/>
            <person name="Rolland N."/>
            <person name="Alcon C."/>
            <person name="Joyard J."/>
            <person name="Garin J."/>
            <person name="Barbier-Brygoo H."/>
            <person name="Ephritikhine G."/>
        </authorList>
    </citation>
    <scope>IDENTIFICATION BY MASS SPECTROMETRY</scope>
    <scope>SUBCELLULAR LOCATION [LARGE SCALE ANALYSIS]</scope>
</reference>
<reference key="6">
    <citation type="journal article" date="2004" name="Plant Cell">
        <title>Arabidopsis formin AtFH6 is a plasma membrane-associated protein upregulated in giant cells induced by parasitic nematodes.</title>
        <authorList>
            <person name="Favery B."/>
            <person name="Chelysheva L.A."/>
            <person name="Lebris M."/>
            <person name="Jammes F."/>
            <person name="Marmagne A."/>
            <person name="De Almeida-Engler J."/>
            <person name="Lecomte P."/>
            <person name="Vaury C."/>
            <person name="Arkowitz R.A."/>
            <person name="Abad P."/>
        </authorList>
    </citation>
    <scope>SUBCELLULAR LOCATION</scope>
</reference>
<reference key="7">
    <citation type="journal article" date="2007" name="Mol. Cell. Proteomics">
        <title>A high content in lipid-modified peripheral proteins and integral receptor kinases features in the arabidopsis plasma membrane proteome.</title>
        <authorList>
            <person name="Marmagne A."/>
            <person name="Ferro M."/>
            <person name="Meinnel T."/>
            <person name="Bruley C."/>
            <person name="Kuhn L."/>
            <person name="Garin J."/>
            <person name="Barbier-Brygoo H."/>
            <person name="Ephritikhine G."/>
        </authorList>
    </citation>
    <scope>IDENTIFICATION BY MASS SPECTROMETRY</scope>
    <scope>SUBCELLULAR LOCATION [LARGE SCALE ANALYSIS]</scope>
</reference>
<reference key="8">
    <citation type="book" date="2009" name="Proceedings of the 20th international conference on Arabidopsis research">
        <title>New classes of proteins forming complexes with resistance proteins.</title>
        <authorList>
            <person name="Qi Y."/>
            <person name="Katagiri F."/>
        </authorList>
    </citation>
    <scope>INTERACTION WITH RESISTANCE PROTEINS</scope>
    <scope>SUBUNIT</scope>
    <scope>SUBCELLULAR LOCATION</scope>
</reference>
<reference key="9">
    <citation type="journal article" date="2009" name="Plant Cell Environ.">
        <title>A novel simple extracellular leucine-rich repeat (eLRR) domain protein from rice (OsLRR1) enters the endosomal pathway and interacts with the hypersensitive-induced reaction protein 1 (OsHIR1).</title>
        <authorList>
            <person name="Zhou L."/>
            <person name="Cheung M.Y."/>
            <person name="Zhang Q."/>
            <person name="Lei C.L."/>
            <person name="Zhang S.H."/>
            <person name="Sun S.S."/>
            <person name="Lam H.M."/>
        </authorList>
    </citation>
    <scope>INTERACTION WITH LRR1</scope>
</reference>
<evidence type="ECO:0000250" key="1">
    <source>
        <dbReference type="UniProtKB" id="Q5GI04"/>
    </source>
</evidence>
<evidence type="ECO:0000255" key="2"/>
<evidence type="ECO:0000269" key="3">
    <source>
    </source>
</evidence>
<evidence type="ECO:0000269" key="4">
    <source>
    </source>
</evidence>
<evidence type="ECO:0000269" key="5">
    <source ref="8"/>
</evidence>
<evidence type="ECO:0000303" key="6">
    <source>
    </source>
</evidence>
<evidence type="ECO:0000303" key="7">
    <source>
    </source>
</evidence>
<evidence type="ECO:0000305" key="8"/>
<evidence type="ECO:0000305" key="9">
    <source>
    </source>
</evidence>
<evidence type="ECO:0000305" key="10">
    <source>
    </source>
</evidence>
<evidence type="ECO:0000305" key="11">
    <source ref="8"/>
</evidence>
<evidence type="ECO:0000312" key="12">
    <source>
        <dbReference type="Araport" id="AT5G62740"/>
    </source>
</evidence>
<evidence type="ECO:0000312" key="13">
    <source>
        <dbReference type="EMBL" id="BAB10843.1"/>
    </source>
</evidence>
<feature type="initiator methionine" description="Removed" evidence="2">
    <location>
        <position position="1"/>
    </location>
</feature>
<feature type="chain" id="PRO_0000398596" description="Hypersensitive-induced response protein 1">
    <location>
        <begin position="2"/>
        <end position="286"/>
    </location>
</feature>
<feature type="coiled-coil region" evidence="2">
    <location>
        <begin position="114"/>
        <end position="190"/>
    </location>
</feature>
<feature type="lipid moiety-binding region" description="N-myristoyl glycine" evidence="2">
    <location>
        <position position="2"/>
    </location>
</feature>
<comment type="function">
    <text evidence="1">Positive regulator of hypersensitive response (HR)-like cell death. May be involved in potassium ion channel regulation.</text>
</comment>
<comment type="subunit">
    <text evidence="4 5">Self-interacts and forms heteromers (Ref.8). Interacts with NB-LRR class of R proteins before R proteins (e.g. RPS2 or RPM1) are activated by the effectors (Ref.8). Interacts with LRR1 (PubMed:19712067).</text>
</comment>
<comment type="interaction">
    <interactant intactId="EBI-1807466">
        <id>Q9FM19</id>
    </interactant>
    <interactant intactId="EBI-1100634">
        <id>Q9C5U2</id>
        <label>AHK2</label>
    </interactant>
    <organismsDiffer>false</organismsDiffer>
    <experiments>2</experiments>
</comment>
<comment type="subcellular location">
    <subcellularLocation>
        <location evidence="3 9 10 11">Cell membrane</location>
        <topology evidence="8">Lipid-anchor</topology>
        <orientation evidence="9 10 11">Cytoplasmic side</orientation>
    </subcellularLocation>
</comment>
<organism>
    <name type="scientific">Arabidopsis thaliana</name>
    <name type="common">Mouse-ear cress</name>
    <dbReference type="NCBI Taxonomy" id="3702"/>
    <lineage>
        <taxon>Eukaryota</taxon>
        <taxon>Viridiplantae</taxon>
        <taxon>Streptophyta</taxon>
        <taxon>Embryophyta</taxon>
        <taxon>Tracheophyta</taxon>
        <taxon>Spermatophyta</taxon>
        <taxon>Magnoliopsida</taxon>
        <taxon>eudicotyledons</taxon>
        <taxon>Gunneridae</taxon>
        <taxon>Pentapetalae</taxon>
        <taxon>rosids</taxon>
        <taxon>malvids</taxon>
        <taxon>Brassicales</taxon>
        <taxon>Brassicaceae</taxon>
        <taxon>Camelineae</taxon>
        <taxon>Arabidopsis</taxon>
    </lineage>
</organism>